<geneLocation type="chloroplast"/>
<reference key="1">
    <citation type="journal article" date="1995" name="Plant Mol. Biol. Rep.">
        <title>Complete nucleotide sequence of the Porphyra purpurea chloroplast genome.</title>
        <authorList>
            <person name="Reith M.E."/>
            <person name="Munholland J."/>
        </authorList>
    </citation>
    <scope>NUCLEOTIDE SEQUENCE [LARGE SCALE GENOMIC DNA]</scope>
    <source>
        <strain>Avonport</strain>
    </source>
</reference>
<keyword id="KW-0150">Chloroplast</keyword>
<keyword id="KW-0249">Electron transport</keyword>
<keyword id="KW-0349">Heme</keyword>
<keyword id="KW-0408">Iron</keyword>
<keyword id="KW-0472">Membrane</keyword>
<keyword id="KW-0479">Metal-binding</keyword>
<keyword id="KW-0602">Photosynthesis</keyword>
<keyword id="KW-0934">Plastid</keyword>
<keyword id="KW-0732">Signal</keyword>
<keyword id="KW-0793">Thylakoid</keyword>
<keyword id="KW-0812">Transmembrane</keyword>
<keyword id="KW-1133">Transmembrane helix</keyword>
<keyword id="KW-0813">Transport</keyword>
<dbReference type="EMBL" id="U38804">
    <property type="protein sequence ID" value="AAC08151.1"/>
    <property type="molecule type" value="Genomic_DNA"/>
</dbReference>
<dbReference type="PIR" id="S73186">
    <property type="entry name" value="S73186"/>
</dbReference>
<dbReference type="RefSeq" id="NP_053875.1">
    <property type="nucleotide sequence ID" value="NC_000925.1"/>
</dbReference>
<dbReference type="SMR" id="P51265"/>
<dbReference type="GeneID" id="809894"/>
<dbReference type="GO" id="GO:0009535">
    <property type="term" value="C:chloroplast thylakoid membrane"/>
    <property type="evidence" value="ECO:0007669"/>
    <property type="project" value="UniProtKB-SubCell"/>
</dbReference>
<dbReference type="GO" id="GO:0009055">
    <property type="term" value="F:electron transfer activity"/>
    <property type="evidence" value="ECO:0007669"/>
    <property type="project" value="UniProtKB-UniRule"/>
</dbReference>
<dbReference type="GO" id="GO:0020037">
    <property type="term" value="F:heme binding"/>
    <property type="evidence" value="ECO:0007669"/>
    <property type="project" value="InterPro"/>
</dbReference>
<dbReference type="GO" id="GO:0005506">
    <property type="term" value="F:iron ion binding"/>
    <property type="evidence" value="ECO:0007669"/>
    <property type="project" value="InterPro"/>
</dbReference>
<dbReference type="GO" id="GO:0015979">
    <property type="term" value="P:photosynthesis"/>
    <property type="evidence" value="ECO:0007669"/>
    <property type="project" value="UniProtKB-UniRule"/>
</dbReference>
<dbReference type="FunFam" id="2.60.40.830:FF:000001">
    <property type="entry name" value="Cytochrome f"/>
    <property type="match status" value="1"/>
</dbReference>
<dbReference type="Gene3D" id="2.40.50.100">
    <property type="match status" value="1"/>
</dbReference>
<dbReference type="Gene3D" id="2.60.40.830">
    <property type="entry name" value="Cytochrome f large domain"/>
    <property type="match status" value="1"/>
</dbReference>
<dbReference type="Gene3D" id="1.20.5.700">
    <property type="entry name" value="Single helix bin"/>
    <property type="match status" value="1"/>
</dbReference>
<dbReference type="HAMAP" id="MF_00610">
    <property type="entry name" value="Cytb6_f_cytF"/>
    <property type="match status" value="1"/>
</dbReference>
<dbReference type="InterPro" id="IPR024058">
    <property type="entry name" value="Cyt-f_TM"/>
</dbReference>
<dbReference type="InterPro" id="IPR002325">
    <property type="entry name" value="Cyt_f"/>
</dbReference>
<dbReference type="InterPro" id="IPR024094">
    <property type="entry name" value="Cyt_f_lg_dom"/>
</dbReference>
<dbReference type="InterPro" id="IPR036826">
    <property type="entry name" value="Cyt_f_lg_dom_sf"/>
</dbReference>
<dbReference type="InterPro" id="IPR011054">
    <property type="entry name" value="Rudment_hybrid_motif"/>
</dbReference>
<dbReference type="PANTHER" id="PTHR33288">
    <property type="match status" value="1"/>
</dbReference>
<dbReference type="PANTHER" id="PTHR33288:SF10">
    <property type="entry name" value="CYTOCHROME F"/>
    <property type="match status" value="1"/>
</dbReference>
<dbReference type="Pfam" id="PF01333">
    <property type="entry name" value="Apocytochr_F_C"/>
    <property type="match status" value="1"/>
</dbReference>
<dbReference type="Pfam" id="PF16639">
    <property type="entry name" value="Apocytochr_F_N"/>
    <property type="match status" value="1"/>
</dbReference>
<dbReference type="PRINTS" id="PR00610">
    <property type="entry name" value="CYTOCHROMEF"/>
</dbReference>
<dbReference type="SUPFAM" id="SSF103431">
    <property type="entry name" value="Cytochrome f subunit of the cytochrome b6f complex, transmembrane anchor"/>
    <property type="match status" value="1"/>
</dbReference>
<dbReference type="SUPFAM" id="SSF49441">
    <property type="entry name" value="Cytochrome f, large domain"/>
    <property type="match status" value="1"/>
</dbReference>
<dbReference type="SUPFAM" id="SSF51246">
    <property type="entry name" value="Rudiment single hybrid motif"/>
    <property type="match status" value="1"/>
</dbReference>
<dbReference type="PROSITE" id="PS51010">
    <property type="entry name" value="CYTF"/>
    <property type="match status" value="1"/>
</dbReference>
<evidence type="ECO:0000250" key="1"/>
<evidence type="ECO:0000255" key="2"/>
<evidence type="ECO:0000305" key="3"/>
<sequence length="320" mass="35012">MKLNSLINLIQKSIYSCTLLLTILNIICIAPNSSNAFPIYAQQAYESPREATGRIVCANCHLAQKPVEIEAPQAVLPNTVFETVVKIPYDNNAKQILGNGSKGGLNVGAVVILPEGFKLAPANRLSPELKEKTKNLYIQPYSTKQSNILVIGPIPGDKNREIIFPILSPDPAKDKQAHFFKYPIYVGGNRGRGQIYPTGDKSNNNLISASASGKINKIEALEKGGFIVHITSTKDSEVNQSIPAGVELKVREGETIQLDQAISKDPNVGGFGQNETEIVLQSPNRIKGMIAFFFVSVLAQIFFVLKKKQFEKVQAAEMNF</sequence>
<gene>
    <name type="primary">petA</name>
</gene>
<feature type="signal peptide" evidence="1">
    <location>
        <begin position="1"/>
        <end position="36"/>
    </location>
</feature>
<feature type="chain" id="PRO_0000023833" description="Cytochrome f">
    <location>
        <begin position="37"/>
        <end position="320"/>
    </location>
</feature>
<feature type="transmembrane region" description="Helical" evidence="2">
    <location>
        <begin position="286"/>
        <end position="305"/>
    </location>
</feature>
<feature type="binding site" description="axial binding residue" evidence="1">
    <location>
        <position position="37"/>
    </location>
    <ligand>
        <name>heme</name>
        <dbReference type="ChEBI" id="CHEBI:30413"/>
    </ligand>
    <ligandPart>
        <name>Fe</name>
        <dbReference type="ChEBI" id="CHEBI:18248"/>
    </ligandPart>
</feature>
<feature type="binding site" description="covalent" evidence="1">
    <location>
        <position position="57"/>
    </location>
    <ligand>
        <name>heme</name>
        <dbReference type="ChEBI" id="CHEBI:30413"/>
    </ligand>
</feature>
<feature type="binding site" description="covalent" evidence="1">
    <location>
        <position position="60"/>
    </location>
    <ligand>
        <name>heme</name>
        <dbReference type="ChEBI" id="CHEBI:30413"/>
    </ligand>
</feature>
<feature type="binding site" description="axial binding residue" evidence="1">
    <location>
        <position position="61"/>
    </location>
    <ligand>
        <name>heme</name>
        <dbReference type="ChEBI" id="CHEBI:30413"/>
    </ligand>
    <ligandPart>
        <name>Fe</name>
        <dbReference type="ChEBI" id="CHEBI:18248"/>
    </ligandPart>
</feature>
<protein>
    <recommendedName>
        <fullName>Cytochrome f</fullName>
    </recommendedName>
</protein>
<name>CYF_PORPU</name>
<accession>P51265</accession>
<organism>
    <name type="scientific">Porphyra purpurea</name>
    <name type="common">Red seaweed</name>
    <name type="synonym">Ulva purpurea</name>
    <dbReference type="NCBI Taxonomy" id="2787"/>
    <lineage>
        <taxon>Eukaryota</taxon>
        <taxon>Rhodophyta</taxon>
        <taxon>Bangiophyceae</taxon>
        <taxon>Bangiales</taxon>
        <taxon>Bangiaceae</taxon>
        <taxon>Porphyra</taxon>
    </lineage>
</organism>
<proteinExistence type="inferred from homology"/>
<comment type="function">
    <text evidence="1">Component of the cytochrome b6-f complex, which mediates electron transfer between photosystem II (PSII) and photosystem I (PSI), cyclic electron flow around PSI, and state transitions.</text>
</comment>
<comment type="cofactor">
    <cofactor evidence="1">
        <name>heme</name>
        <dbReference type="ChEBI" id="CHEBI:30413"/>
    </cofactor>
    <text evidence="1">Binds 1 heme group covalently.</text>
</comment>
<comment type="subunit">
    <text evidence="1">The 4 large subunits of the cytochrome b6-f complex are cytochrome b6, subunit IV (17 kDa polypeptide, petD), cytochrome f and the Rieske protein, while the 4 small subunits are PetG, PetL, PetM and PetN. The complex functions as a dimer (By similarity).</text>
</comment>
<comment type="subcellular location">
    <subcellularLocation>
        <location evidence="1">Plastid</location>
        <location evidence="1">Chloroplast thylakoid membrane</location>
        <topology evidence="1">Single-pass membrane protein</topology>
    </subcellularLocation>
</comment>
<comment type="similarity">
    <text evidence="3">Belongs to the cytochrome f family.</text>
</comment>